<feature type="chain" id="PRO_0000410640" description="Biogenesis of lysosome-related organelles complex 1 subunit BLS1">
    <location>
        <begin position="1"/>
        <end position="101"/>
    </location>
</feature>
<dbReference type="EMBL" id="CU928174">
    <property type="protein sequence ID" value="CAR26572.1"/>
    <property type="molecule type" value="Genomic_DNA"/>
</dbReference>
<dbReference type="RefSeq" id="XP_002495505.1">
    <property type="nucleotide sequence ID" value="XM_002495460.1"/>
</dbReference>
<dbReference type="SMR" id="C5DS11"/>
<dbReference type="FunCoup" id="C5DS11">
    <property type="interactions" value="26"/>
</dbReference>
<dbReference type="STRING" id="559307.C5DS11"/>
<dbReference type="GeneID" id="8202667"/>
<dbReference type="KEGG" id="zro:ZYRO0B12936g"/>
<dbReference type="HOGENOM" id="CLU_150164_0_0_1"/>
<dbReference type="InParanoid" id="C5DS11"/>
<dbReference type="Proteomes" id="UP000008536">
    <property type="component" value="Chromosome B"/>
</dbReference>
<dbReference type="GO" id="GO:0005768">
    <property type="term" value="C:endosome"/>
    <property type="evidence" value="ECO:0007669"/>
    <property type="project" value="UniProtKB-SubCell"/>
</dbReference>
<evidence type="ECO:0000250" key="1"/>
<evidence type="ECO:0000305" key="2"/>
<organism>
    <name type="scientific">Zygosaccharomyces rouxii (strain ATCC 2623 / CBS 732 / NBRC 1130 / NCYC 568 / NRRL Y-229)</name>
    <dbReference type="NCBI Taxonomy" id="559307"/>
    <lineage>
        <taxon>Eukaryota</taxon>
        <taxon>Fungi</taxon>
        <taxon>Dikarya</taxon>
        <taxon>Ascomycota</taxon>
        <taxon>Saccharomycotina</taxon>
        <taxon>Saccharomycetes</taxon>
        <taxon>Saccharomycetales</taxon>
        <taxon>Saccharomycetaceae</taxon>
        <taxon>Zygosaccharomyces</taxon>
    </lineage>
</organism>
<name>BL1S1_ZYGRC</name>
<keyword id="KW-0967">Endosome</keyword>
<keyword id="KW-1185">Reference proteome</keyword>
<keyword id="KW-0813">Transport</keyword>
<sequence>MAPKYELDQLVNSICKSTRDTDASKILKEIEDNNSYITEVQLKRLLKLHDGSFRESLTPLQKLHDKYNEIVMRQGDLQSWAELIDRDLRVLELTMQLAKRR</sequence>
<comment type="function">
    <text evidence="1">Component of the biogenesis of lysosome-related organelles complex-1 (BLOC-1), a complex involved in endosomal cargo sorting.</text>
</comment>
<comment type="subunit">
    <text evidence="1">Component of the biogenesis of lysosome-related organelles complex-1 (BLOC-1).</text>
</comment>
<comment type="subcellular location">
    <subcellularLocation>
        <location evidence="1">Endosome</location>
    </subcellularLocation>
</comment>
<comment type="similarity">
    <text evidence="2">Belongs to the BLOC1S1 family.</text>
</comment>
<protein>
    <recommendedName>
        <fullName>Biogenesis of lysosome-related organelles complex 1 subunit BLS1</fullName>
        <shortName>BLOC-1 subunit BLS1</shortName>
    </recommendedName>
    <alternativeName>
        <fullName>BLOS1-homolog</fullName>
    </alternativeName>
</protein>
<reference key="1">
    <citation type="journal article" date="2009" name="Genome Res.">
        <title>Comparative genomics of protoploid Saccharomycetaceae.</title>
        <authorList>
            <consortium name="The Genolevures Consortium"/>
            <person name="Souciet J.-L."/>
            <person name="Dujon B."/>
            <person name="Gaillardin C."/>
            <person name="Johnston M."/>
            <person name="Baret P.V."/>
            <person name="Cliften P."/>
            <person name="Sherman D.J."/>
            <person name="Weissenbach J."/>
            <person name="Westhof E."/>
            <person name="Wincker P."/>
            <person name="Jubin C."/>
            <person name="Poulain J."/>
            <person name="Barbe V."/>
            <person name="Segurens B."/>
            <person name="Artiguenave F."/>
            <person name="Anthouard V."/>
            <person name="Vacherie B."/>
            <person name="Val M.-E."/>
            <person name="Fulton R.S."/>
            <person name="Minx P."/>
            <person name="Wilson R."/>
            <person name="Durrens P."/>
            <person name="Jean G."/>
            <person name="Marck C."/>
            <person name="Martin T."/>
            <person name="Nikolski M."/>
            <person name="Rolland T."/>
            <person name="Seret M.-L."/>
            <person name="Casaregola S."/>
            <person name="Despons L."/>
            <person name="Fairhead C."/>
            <person name="Fischer G."/>
            <person name="Lafontaine I."/>
            <person name="Leh V."/>
            <person name="Lemaire M."/>
            <person name="de Montigny J."/>
            <person name="Neuveglise C."/>
            <person name="Thierry A."/>
            <person name="Blanc-Lenfle I."/>
            <person name="Bleykasten C."/>
            <person name="Diffels J."/>
            <person name="Fritsch E."/>
            <person name="Frangeul L."/>
            <person name="Goeffon A."/>
            <person name="Jauniaux N."/>
            <person name="Kachouri-Lafond R."/>
            <person name="Payen C."/>
            <person name="Potier S."/>
            <person name="Pribylova L."/>
            <person name="Ozanne C."/>
            <person name="Richard G.-F."/>
            <person name="Sacerdot C."/>
            <person name="Straub M.-L."/>
            <person name="Talla E."/>
        </authorList>
    </citation>
    <scope>NUCLEOTIDE SEQUENCE [LARGE SCALE GENOMIC DNA]</scope>
    <source>
        <strain>ATCC 2623 / CBS 732 / BCRC 21506 / NBRC 1130 / NCYC 568 / NRRL Y-229</strain>
    </source>
</reference>
<gene>
    <name type="primary">BLS1</name>
    <name type="ordered locus">ZYRO0B12936g</name>
</gene>
<proteinExistence type="inferred from homology"/>
<accession>C5DS11</accession>